<protein>
    <recommendedName>
        <fullName>Nucleosome assembly protein 1-like 4</fullName>
    </recommendedName>
</protein>
<keyword id="KW-0143">Chaperone</keyword>
<keyword id="KW-0175">Coiled coil</keyword>
<keyword id="KW-0963">Cytoplasm</keyword>
<keyword id="KW-0539">Nucleus</keyword>
<keyword id="KW-1185">Reference proteome</keyword>
<evidence type="ECO:0000250" key="1"/>
<evidence type="ECO:0000255" key="2"/>
<evidence type="ECO:0000256" key="3">
    <source>
        <dbReference type="SAM" id="MobiDB-lite"/>
    </source>
</evidence>
<evidence type="ECO:0000305" key="4"/>
<sequence length="312" mass="36321">MNEEVEDGEVKPLELSSEDKAILVETLKNKLQALAEQHVDVLESLAPSVRKRVDVLMEIQSQHDELEVKFFEEKAALEAKYQKLYGPLYSKRSKIVSGVLEVQGETEEREEKGVPDFWLNAMKNNEILAEEIHESDEEALKYLKDIKWCRIDDPKGFKFEFFFYTNPFFKNQVLTKTYHMIDEDDEPILEKAIGTEIEWHPGYCLTQEVLTKESSESTKPITKTEECESFFNFFSPPQVPDDDAKIDENTAEELQNQMERDYDIASTLRDKIIPHAVSWFTREAVQDEDYGASWVDDEEEDDNNDEYSDEEA</sequence>
<name>NAP1D_ORYSJ</name>
<dbReference type="EMBL" id="AP003616">
    <property type="protein sequence ID" value="BAD35504.1"/>
    <property type="status" value="ALT_SEQ"/>
    <property type="molecule type" value="Genomic_DNA"/>
</dbReference>
<dbReference type="EMBL" id="AP003626">
    <property type="protein sequence ID" value="BAD35508.1"/>
    <property type="status" value="ALT_SEQ"/>
    <property type="molecule type" value="Genomic_DNA"/>
</dbReference>
<dbReference type="EMBL" id="AP014962">
    <property type="status" value="NOT_ANNOTATED_CDS"/>
    <property type="molecule type" value="Genomic_DNA"/>
</dbReference>
<dbReference type="EMBL" id="CM000143">
    <property type="protein sequence ID" value="EEE66007.1"/>
    <property type="status" value="ALT_SEQ"/>
    <property type="molecule type" value="Genomic_DNA"/>
</dbReference>
<dbReference type="SMR" id="B9FU45"/>
<dbReference type="FunCoup" id="B9FU45">
    <property type="interactions" value="2321"/>
</dbReference>
<dbReference type="STRING" id="39947.B9FU45"/>
<dbReference type="PaxDb" id="39947-B9FU45"/>
<dbReference type="HOGENOM" id="CLU_038841_4_0_1"/>
<dbReference type="InParanoid" id="B9FU45"/>
<dbReference type="Proteomes" id="UP000000763">
    <property type="component" value="Chromosome 6"/>
</dbReference>
<dbReference type="Proteomes" id="UP000007752">
    <property type="component" value="Chromosome 6"/>
</dbReference>
<dbReference type="Proteomes" id="UP000059680">
    <property type="component" value="Chromosome 6"/>
</dbReference>
<dbReference type="GO" id="GO:0000785">
    <property type="term" value="C:chromatin"/>
    <property type="evidence" value="ECO:0000318"/>
    <property type="project" value="GO_Central"/>
</dbReference>
<dbReference type="GO" id="GO:0005737">
    <property type="term" value="C:cytoplasm"/>
    <property type="evidence" value="ECO:0007669"/>
    <property type="project" value="UniProtKB-SubCell"/>
</dbReference>
<dbReference type="GO" id="GO:0005634">
    <property type="term" value="C:nucleus"/>
    <property type="evidence" value="ECO:0000318"/>
    <property type="project" value="GO_Central"/>
</dbReference>
<dbReference type="GO" id="GO:0003682">
    <property type="term" value="F:chromatin binding"/>
    <property type="evidence" value="ECO:0000318"/>
    <property type="project" value="GO_Central"/>
</dbReference>
<dbReference type="GO" id="GO:0042393">
    <property type="term" value="F:histone binding"/>
    <property type="evidence" value="ECO:0000318"/>
    <property type="project" value="GO_Central"/>
</dbReference>
<dbReference type="GO" id="GO:0000724">
    <property type="term" value="P:double-strand break repair via homologous recombination"/>
    <property type="evidence" value="ECO:0007669"/>
    <property type="project" value="UniProtKB-ARBA"/>
</dbReference>
<dbReference type="GO" id="GO:0006334">
    <property type="term" value="P:nucleosome assembly"/>
    <property type="evidence" value="ECO:0000318"/>
    <property type="project" value="GO_Central"/>
</dbReference>
<dbReference type="FunFam" id="1.20.5.1500:FF:000001">
    <property type="entry name" value="Nucleosome assembly protein 1-like 1"/>
    <property type="match status" value="1"/>
</dbReference>
<dbReference type="FunFam" id="3.30.1120.90:FF:000005">
    <property type="entry name" value="Nucleosome assembly protein11"/>
    <property type="match status" value="1"/>
</dbReference>
<dbReference type="Gene3D" id="1.20.5.1500">
    <property type="match status" value="1"/>
</dbReference>
<dbReference type="Gene3D" id="3.30.1120.90">
    <property type="entry name" value="Nucleosome assembly protein"/>
    <property type="match status" value="1"/>
</dbReference>
<dbReference type="InterPro" id="IPR037231">
    <property type="entry name" value="NAP-like_sf"/>
</dbReference>
<dbReference type="InterPro" id="IPR002164">
    <property type="entry name" value="NAP_family"/>
</dbReference>
<dbReference type="PANTHER" id="PTHR11875">
    <property type="entry name" value="TESTIS-SPECIFIC Y-ENCODED PROTEIN"/>
    <property type="match status" value="1"/>
</dbReference>
<dbReference type="Pfam" id="PF00956">
    <property type="entry name" value="NAP"/>
    <property type="match status" value="1"/>
</dbReference>
<dbReference type="SUPFAM" id="SSF143113">
    <property type="entry name" value="NAP-like"/>
    <property type="match status" value="1"/>
</dbReference>
<feature type="chain" id="PRO_0000423694" description="Nucleosome assembly protein 1-like 4">
    <location>
        <begin position="1"/>
        <end position="312"/>
    </location>
</feature>
<feature type="region of interest" description="Disordered" evidence="3">
    <location>
        <begin position="289"/>
        <end position="312"/>
    </location>
</feature>
<feature type="coiled-coil region" evidence="2">
    <location>
        <begin position="24"/>
        <end position="78"/>
    </location>
</feature>
<feature type="short sequence motif" description="Nuclear export signal" evidence="2">
    <location>
        <begin position="45"/>
        <end position="60"/>
    </location>
</feature>
<reference key="1">
    <citation type="journal article" date="2005" name="Nature">
        <title>The map-based sequence of the rice genome.</title>
        <authorList>
            <consortium name="International rice genome sequencing project (IRGSP)"/>
        </authorList>
    </citation>
    <scope>NUCLEOTIDE SEQUENCE [LARGE SCALE GENOMIC DNA]</scope>
    <source>
        <strain>cv. Nipponbare</strain>
    </source>
</reference>
<reference key="2">
    <citation type="journal article" date="2013" name="Rice">
        <title>Improvement of the Oryza sativa Nipponbare reference genome using next generation sequence and optical map data.</title>
        <authorList>
            <person name="Kawahara Y."/>
            <person name="de la Bastide M."/>
            <person name="Hamilton J.P."/>
            <person name="Kanamori H."/>
            <person name="McCombie W.R."/>
            <person name="Ouyang S."/>
            <person name="Schwartz D.C."/>
            <person name="Tanaka T."/>
            <person name="Wu J."/>
            <person name="Zhou S."/>
            <person name="Childs K.L."/>
            <person name="Davidson R.M."/>
            <person name="Lin H."/>
            <person name="Quesada-Ocampo L."/>
            <person name="Vaillancourt B."/>
            <person name="Sakai H."/>
            <person name="Lee S.S."/>
            <person name="Kim J."/>
            <person name="Numa H."/>
            <person name="Itoh T."/>
            <person name="Buell C.R."/>
            <person name="Matsumoto T."/>
        </authorList>
    </citation>
    <scope>GENOME REANNOTATION</scope>
    <source>
        <strain>cv. Nipponbare</strain>
    </source>
</reference>
<reference key="3">
    <citation type="journal article" date="2005" name="PLoS Biol.">
        <title>The genomes of Oryza sativa: a history of duplications.</title>
        <authorList>
            <person name="Yu J."/>
            <person name="Wang J."/>
            <person name="Lin W."/>
            <person name="Li S."/>
            <person name="Li H."/>
            <person name="Zhou J."/>
            <person name="Ni P."/>
            <person name="Dong W."/>
            <person name="Hu S."/>
            <person name="Zeng C."/>
            <person name="Zhang J."/>
            <person name="Zhang Y."/>
            <person name="Li R."/>
            <person name="Xu Z."/>
            <person name="Li S."/>
            <person name="Li X."/>
            <person name="Zheng H."/>
            <person name="Cong L."/>
            <person name="Lin L."/>
            <person name="Yin J."/>
            <person name="Geng J."/>
            <person name="Li G."/>
            <person name="Shi J."/>
            <person name="Liu J."/>
            <person name="Lv H."/>
            <person name="Li J."/>
            <person name="Wang J."/>
            <person name="Deng Y."/>
            <person name="Ran L."/>
            <person name="Shi X."/>
            <person name="Wang X."/>
            <person name="Wu Q."/>
            <person name="Li C."/>
            <person name="Ren X."/>
            <person name="Wang J."/>
            <person name="Wang X."/>
            <person name="Li D."/>
            <person name="Liu D."/>
            <person name="Zhang X."/>
            <person name="Ji Z."/>
            <person name="Zhao W."/>
            <person name="Sun Y."/>
            <person name="Zhang Z."/>
            <person name="Bao J."/>
            <person name="Han Y."/>
            <person name="Dong L."/>
            <person name="Ji J."/>
            <person name="Chen P."/>
            <person name="Wu S."/>
            <person name="Liu J."/>
            <person name="Xiao Y."/>
            <person name="Bu D."/>
            <person name="Tan J."/>
            <person name="Yang L."/>
            <person name="Ye C."/>
            <person name="Zhang J."/>
            <person name="Xu J."/>
            <person name="Zhou Y."/>
            <person name="Yu Y."/>
            <person name="Zhang B."/>
            <person name="Zhuang S."/>
            <person name="Wei H."/>
            <person name="Liu B."/>
            <person name="Lei M."/>
            <person name="Yu H."/>
            <person name="Li Y."/>
            <person name="Xu H."/>
            <person name="Wei S."/>
            <person name="He X."/>
            <person name="Fang L."/>
            <person name="Zhang Z."/>
            <person name="Zhang Y."/>
            <person name="Huang X."/>
            <person name="Su Z."/>
            <person name="Tong W."/>
            <person name="Li J."/>
            <person name="Tong Z."/>
            <person name="Li S."/>
            <person name="Ye J."/>
            <person name="Wang L."/>
            <person name="Fang L."/>
            <person name="Lei T."/>
            <person name="Chen C.-S."/>
            <person name="Chen H.-C."/>
            <person name="Xu Z."/>
            <person name="Li H."/>
            <person name="Huang H."/>
            <person name="Zhang F."/>
            <person name="Xu H."/>
            <person name="Li N."/>
            <person name="Zhao C."/>
            <person name="Li S."/>
            <person name="Dong L."/>
            <person name="Huang Y."/>
            <person name="Li L."/>
            <person name="Xi Y."/>
            <person name="Qi Q."/>
            <person name="Li W."/>
            <person name="Zhang B."/>
            <person name="Hu W."/>
            <person name="Zhang Y."/>
            <person name="Tian X."/>
            <person name="Jiao Y."/>
            <person name="Liang X."/>
            <person name="Jin J."/>
            <person name="Gao L."/>
            <person name="Zheng W."/>
            <person name="Hao B."/>
            <person name="Liu S.-M."/>
            <person name="Wang W."/>
            <person name="Yuan L."/>
            <person name="Cao M."/>
            <person name="McDermott J."/>
            <person name="Samudrala R."/>
            <person name="Wang J."/>
            <person name="Wong G.K.-S."/>
            <person name="Yang H."/>
        </authorList>
    </citation>
    <scope>NUCLEOTIDE SEQUENCE [LARGE SCALE GENOMIC DNA]</scope>
    <source>
        <strain>cv. Nipponbare</strain>
    </source>
</reference>
<gene>
    <name type="ordered locus">Os06g0611700</name>
    <name type="ordered locus">LOC_Os06g40920</name>
    <name type="ORF">OsJ_21957</name>
    <name type="ORF">P0429G06.8</name>
    <name type="ORF">P0490F09.44</name>
</gene>
<accession>B9FU45</accession>
<accession>Q69X43</accession>
<comment type="function">
    <text evidence="1">May modulate chromatin structure by regulation of nucleosome assembly/disassembly.</text>
</comment>
<comment type="subcellular location">
    <subcellularLocation>
        <location evidence="1">Nucleus</location>
    </subcellularLocation>
    <subcellularLocation>
        <location evidence="1">Cytoplasm</location>
    </subcellularLocation>
</comment>
<comment type="domain">
    <text>The acidic domain is probably involved in the interaction with histones.</text>
</comment>
<comment type="similarity">
    <text evidence="4">Belongs to the nucleosome assembly protein (NAP) family.</text>
</comment>
<comment type="sequence caution" evidence="4">
    <conflict type="erroneous gene model prediction">
        <sequence resource="EMBL-CDS" id="BAD35504"/>
    </conflict>
</comment>
<comment type="sequence caution" evidence="4">
    <conflict type="erroneous gene model prediction">
        <sequence resource="EMBL-CDS" id="BAD35508"/>
    </conflict>
</comment>
<comment type="sequence caution" evidence="4">
    <conflict type="erroneous gene model prediction">
        <sequence resource="EMBL-CDS" id="EEE66007"/>
    </conflict>
</comment>
<proteinExistence type="inferred from homology"/>
<organism>
    <name type="scientific">Oryza sativa subsp. japonica</name>
    <name type="common">Rice</name>
    <dbReference type="NCBI Taxonomy" id="39947"/>
    <lineage>
        <taxon>Eukaryota</taxon>
        <taxon>Viridiplantae</taxon>
        <taxon>Streptophyta</taxon>
        <taxon>Embryophyta</taxon>
        <taxon>Tracheophyta</taxon>
        <taxon>Spermatophyta</taxon>
        <taxon>Magnoliopsida</taxon>
        <taxon>Liliopsida</taxon>
        <taxon>Poales</taxon>
        <taxon>Poaceae</taxon>
        <taxon>BOP clade</taxon>
        <taxon>Oryzoideae</taxon>
        <taxon>Oryzeae</taxon>
        <taxon>Oryzinae</taxon>
        <taxon>Oryza</taxon>
        <taxon>Oryza sativa</taxon>
    </lineage>
</organism>